<evidence type="ECO:0000255" key="1"/>
<evidence type="ECO:0000255" key="2">
    <source>
        <dbReference type="PROSITE-ProRule" id="PRU00114"/>
    </source>
</evidence>
<evidence type="ECO:0000256" key="3">
    <source>
        <dbReference type="SAM" id="MobiDB-lite"/>
    </source>
</evidence>
<evidence type="ECO:0000269" key="4">
    <source>
    </source>
</evidence>
<evidence type="ECO:0000269" key="5">
    <source>
    </source>
</evidence>
<evidence type="ECO:0000269" key="6">
    <source>
    </source>
</evidence>
<evidence type="ECO:0000269" key="7">
    <source>
    </source>
</evidence>
<evidence type="ECO:0000269" key="8">
    <source>
    </source>
</evidence>
<evidence type="ECO:0000269" key="9">
    <source>
    </source>
</evidence>
<evidence type="ECO:0000269" key="10">
    <source>
    </source>
</evidence>
<evidence type="ECO:0000269" key="11">
    <source>
    </source>
</evidence>
<evidence type="ECO:0000269" key="12">
    <source>
    </source>
</evidence>
<evidence type="ECO:0000269" key="13">
    <source>
    </source>
</evidence>
<evidence type="ECO:0000269" key="14">
    <source>
    </source>
</evidence>
<evidence type="ECO:0000269" key="15">
    <source>
    </source>
</evidence>
<evidence type="ECO:0000269" key="16">
    <source ref="4"/>
</evidence>
<evidence type="ECO:0000303" key="17">
    <source>
    </source>
</evidence>
<evidence type="ECO:0000303" key="18">
    <source>
    </source>
</evidence>
<evidence type="ECO:0000303" key="19">
    <source>
    </source>
</evidence>
<evidence type="ECO:0000305" key="20"/>
<evidence type="ECO:0000312" key="21">
    <source>
        <dbReference type="HGNC" id="HGNC:6606"/>
    </source>
</evidence>
<evidence type="ECO:0007744" key="22">
    <source>
        <dbReference type="PDB" id="2GW5"/>
    </source>
</evidence>
<evidence type="ECO:0007829" key="23">
    <source>
        <dbReference type="PDB" id="2DYP"/>
    </source>
</evidence>
<evidence type="ECO:0007829" key="24">
    <source>
        <dbReference type="PDB" id="2GW5"/>
    </source>
</evidence>
<evidence type="ECO:0007829" key="25">
    <source>
        <dbReference type="PDB" id="4LLA"/>
    </source>
</evidence>
<evidence type="ECO:0007829" key="26">
    <source>
        <dbReference type="PDB" id="6BCS"/>
    </source>
</evidence>
<keyword id="KW-0002">3D-structure</keyword>
<keyword id="KW-1064">Adaptive immunity</keyword>
<keyword id="KW-0024">Alternative initiation</keyword>
<keyword id="KW-0877">Alternative promoter usage</keyword>
<keyword id="KW-0025">Alternative splicing</keyword>
<keyword id="KW-1003">Cell membrane</keyword>
<keyword id="KW-1015">Disulfide bond</keyword>
<keyword id="KW-0325">Glycoprotein</keyword>
<keyword id="KW-0391">Immunity</keyword>
<keyword id="KW-0393">Immunoglobulin domain</keyword>
<keyword id="KW-0472">Membrane</keyword>
<keyword id="KW-0597">Phosphoprotein</keyword>
<keyword id="KW-1267">Proteomics identification</keyword>
<keyword id="KW-0675">Receptor</keyword>
<keyword id="KW-1185">Reference proteome</keyword>
<keyword id="KW-0677">Repeat</keyword>
<keyword id="KW-0732">Signal</keyword>
<keyword id="KW-0812">Transmembrane</keyword>
<keyword id="KW-1133">Transmembrane helix</keyword>
<dbReference type="EMBL" id="AF004231">
    <property type="protein sequence ID" value="AAB67711.1"/>
    <property type="molecule type" value="mRNA"/>
</dbReference>
<dbReference type="EMBL" id="AF025528">
    <property type="protein sequence ID" value="AAB87662.1"/>
    <property type="molecule type" value="mRNA"/>
</dbReference>
<dbReference type="EMBL" id="AF283986">
    <property type="protein sequence ID" value="AAL36990.1"/>
    <property type="molecule type" value="mRNA"/>
</dbReference>
<dbReference type="EMBL" id="AF283987">
    <property type="protein sequence ID" value="AAL36991.1"/>
    <property type="molecule type" value="mRNA"/>
</dbReference>
<dbReference type="EMBL" id="AC010518">
    <property type="status" value="NOT_ANNOTATED_CDS"/>
    <property type="molecule type" value="Genomic_DNA"/>
</dbReference>
<dbReference type="EMBL" id="BC036827">
    <property type="protein sequence ID" value="AAH36827.1"/>
    <property type="molecule type" value="mRNA"/>
</dbReference>
<dbReference type="CCDS" id="CCDS12886.1">
    <molecule id="Q8N423-1"/>
</dbReference>
<dbReference type="CCDS" id="CCDS42612.1">
    <molecule id="Q8N423-2"/>
</dbReference>
<dbReference type="CCDS" id="CCDS62791.1">
    <molecule id="Q8N423-4"/>
</dbReference>
<dbReference type="CCDS" id="CCDS62792.1">
    <molecule id="Q8N423-3"/>
</dbReference>
<dbReference type="RefSeq" id="NP_001074447.2">
    <molecule id="Q8N423-2"/>
    <property type="nucleotide sequence ID" value="NM_001080978.4"/>
</dbReference>
<dbReference type="RefSeq" id="NP_001265332.2">
    <molecule id="Q8N423-2"/>
    <property type="nucleotide sequence ID" value="NM_001278403.3"/>
</dbReference>
<dbReference type="RefSeq" id="NP_001265333.2">
    <molecule id="Q8N423-4"/>
    <property type="nucleotide sequence ID" value="NM_001278404.3"/>
</dbReference>
<dbReference type="RefSeq" id="NP_001265334.2">
    <molecule id="Q8N423-3"/>
    <property type="nucleotide sequence ID" value="NM_001278405.2"/>
</dbReference>
<dbReference type="RefSeq" id="NP_001265335.2">
    <property type="nucleotide sequence ID" value="NM_001278406.2"/>
</dbReference>
<dbReference type="RefSeq" id="NP_005865.3">
    <molecule id="Q8N423-1"/>
    <property type="nucleotide sequence ID" value="NM_005874.5"/>
</dbReference>
<dbReference type="PDB" id="2DYP">
    <property type="method" value="X-ray"/>
    <property type="resolution" value="2.50 A"/>
    <property type="chains" value="D=24-219"/>
</dbReference>
<dbReference type="PDB" id="2GW5">
    <property type="method" value="X-ray"/>
    <property type="resolution" value="1.80 A"/>
    <property type="chains" value="A=24-219"/>
</dbReference>
<dbReference type="PDB" id="4LLA">
    <property type="method" value="X-ray"/>
    <property type="resolution" value="2.50 A"/>
    <property type="chains" value="A/B/C=222-419"/>
</dbReference>
<dbReference type="PDB" id="6AED">
    <property type="method" value="X-ray"/>
    <property type="resolution" value="3.80 A"/>
    <property type="chains" value="A=27-419"/>
</dbReference>
<dbReference type="PDB" id="6BCS">
    <property type="method" value="X-ray"/>
    <property type="resolution" value="2.10 A"/>
    <property type="chains" value="A=24-220"/>
</dbReference>
<dbReference type="PDBsum" id="2DYP"/>
<dbReference type="PDBsum" id="2GW5"/>
<dbReference type="PDBsum" id="4LLA"/>
<dbReference type="PDBsum" id="6AED"/>
<dbReference type="PDBsum" id="6BCS"/>
<dbReference type="SMR" id="Q8N423"/>
<dbReference type="DIP" id="DIP-59888N"/>
<dbReference type="FunCoup" id="Q8N423">
    <property type="interactions" value="133"/>
</dbReference>
<dbReference type="IntAct" id="Q8N423">
    <property type="interactions" value="22"/>
</dbReference>
<dbReference type="STRING" id="9606.ENSP00000375629"/>
<dbReference type="GlyCosmos" id="Q8N423">
    <property type="glycosylation" value="5 sites, 1 glycan"/>
</dbReference>
<dbReference type="GlyGen" id="Q8N423">
    <property type="glycosylation" value="4 sites"/>
</dbReference>
<dbReference type="iPTMnet" id="Q8N423"/>
<dbReference type="PhosphoSitePlus" id="Q8N423"/>
<dbReference type="BioMuta" id="LILRB2"/>
<dbReference type="DMDM" id="311033485"/>
<dbReference type="MassIVE" id="Q8N423"/>
<dbReference type="PaxDb" id="9606-ENSP00000375629"/>
<dbReference type="PeptideAtlas" id="Q8N423"/>
<dbReference type="ProteomicsDB" id="2083"/>
<dbReference type="ProteomicsDB" id="71866">
    <molecule id="Q8N423-1"/>
</dbReference>
<dbReference type="ProteomicsDB" id="71867">
    <molecule id="Q8N423-2"/>
</dbReference>
<dbReference type="ProteomicsDB" id="9927"/>
<dbReference type="ABCD" id="Q8N423">
    <property type="antibodies" value="11 sequenced antibodies"/>
</dbReference>
<dbReference type="Antibodypedia" id="32869">
    <property type="antibodies" value="312 antibodies from 29 providers"/>
</dbReference>
<dbReference type="DNASU" id="10288"/>
<dbReference type="Ensembl" id="ENST00000314446.10">
    <molecule id="Q8N423-2"/>
    <property type="protein sequence ID" value="ENSP00000319960.5"/>
    <property type="gene ID" value="ENSG00000131042.15"/>
</dbReference>
<dbReference type="Ensembl" id="ENST00000391746.5">
    <molecule id="Q8N423-3"/>
    <property type="protein sequence ID" value="ENSP00000375626.1"/>
    <property type="gene ID" value="ENSG00000131042.15"/>
</dbReference>
<dbReference type="Ensembl" id="ENST00000391748.5">
    <molecule id="Q8N423-2"/>
    <property type="protein sequence ID" value="ENSP00000375628.1"/>
    <property type="gene ID" value="ENSG00000131042.15"/>
</dbReference>
<dbReference type="Ensembl" id="ENST00000391749.4">
    <molecule id="Q8N423-1"/>
    <property type="protein sequence ID" value="ENSP00000375629.4"/>
    <property type="gene ID" value="ENSG00000131042.15"/>
</dbReference>
<dbReference type="Ensembl" id="ENST00000434421.5">
    <molecule id="Q8N423-4"/>
    <property type="protein sequence ID" value="ENSP00000410117.1"/>
    <property type="gene ID" value="ENSG00000131042.15"/>
</dbReference>
<dbReference type="Ensembl" id="ENST00000610886.4">
    <property type="protein sequence ID" value="ENSP00000482933.1"/>
    <property type="gene ID" value="ENSG00000276146.4"/>
</dbReference>
<dbReference type="Ensembl" id="ENST00000614225.4">
    <property type="protein sequence ID" value="ENSP00000480841.1"/>
    <property type="gene ID" value="ENSG00000275463.4"/>
</dbReference>
<dbReference type="Ensembl" id="ENST00000617341.4">
    <property type="protein sequence ID" value="ENSP00000484373.1"/>
    <property type="gene ID" value="ENSG00000276146.4"/>
</dbReference>
<dbReference type="Ensembl" id="ENST00000617886.4">
    <property type="protein sequence ID" value="ENSP00000483553.1"/>
    <property type="gene ID" value="ENSG00000276146.4"/>
</dbReference>
<dbReference type="Ensembl" id="ENST00000618392.4">
    <property type="protein sequence ID" value="ENSP00000480302.1"/>
    <property type="gene ID" value="ENSG00000274513.4"/>
</dbReference>
<dbReference type="Ensembl" id="ENST00000618705.2">
    <property type="protein sequence ID" value="ENSP00000481208.1"/>
    <property type="gene ID" value="ENSG00000275463.4"/>
</dbReference>
<dbReference type="Ensembl" id="ENST00000619122.3">
    <property type="protein sequence ID" value="ENSP00000483478.1"/>
    <property type="gene ID" value="ENSG00000275463.4"/>
</dbReference>
<dbReference type="Ensembl" id="ENST00000621020.4">
    <property type="protein sequence ID" value="ENSP00000483014.1"/>
    <property type="gene ID" value="ENSG00000275463.4"/>
</dbReference>
<dbReference type="GeneID" id="10288"/>
<dbReference type="KEGG" id="hsa:10288"/>
<dbReference type="MANE-Select" id="ENST00000314446.10">
    <property type="protein sequence ID" value="ENSP00000319960.5"/>
    <property type="RefSeq nucleotide sequence ID" value="NM_001080978.4"/>
    <property type="RefSeq protein sequence ID" value="NP_001074447.2"/>
</dbReference>
<dbReference type="UCSC" id="uc010eri.4">
    <molecule id="Q8N423-2"/>
    <property type="organism name" value="human"/>
</dbReference>
<dbReference type="AGR" id="HGNC:6606"/>
<dbReference type="CTD" id="10288"/>
<dbReference type="DisGeNET" id="10288"/>
<dbReference type="GeneCards" id="LILRB2"/>
<dbReference type="HGNC" id="HGNC:6606">
    <property type="gene designation" value="LILRB2"/>
</dbReference>
<dbReference type="HPA" id="ENSG00000131042">
    <property type="expression patterns" value="Group enriched (bone marrow, lung, lymphoid tissue)"/>
</dbReference>
<dbReference type="MIM" id="604815">
    <property type="type" value="gene"/>
</dbReference>
<dbReference type="neXtProt" id="NX_Q8N423"/>
<dbReference type="NIAGADS" id="ENSG00000131042"/>
<dbReference type="OpenTargets" id="ENSG00000131042"/>
<dbReference type="PharmGKB" id="PA30380"/>
<dbReference type="VEuPathDB" id="HostDB:ENSG00000131042"/>
<dbReference type="eggNOG" id="ENOG502RYEX">
    <property type="taxonomic scope" value="Eukaryota"/>
</dbReference>
<dbReference type="GeneTree" id="ENSGT01100000263478"/>
<dbReference type="HOGENOM" id="CLU_021100_2_3_1"/>
<dbReference type="InParanoid" id="Q8N423"/>
<dbReference type="OMA" id="ASWIMRI"/>
<dbReference type="OrthoDB" id="6151406at2759"/>
<dbReference type="PAN-GO" id="Q8N423">
    <property type="GO annotations" value="3 GO annotations based on evolutionary models"/>
</dbReference>
<dbReference type="PhylomeDB" id="Q8N423"/>
<dbReference type="TreeFam" id="TF336644"/>
<dbReference type="PathwayCommons" id="Q8N423"/>
<dbReference type="Reactome" id="R-HSA-198933">
    <property type="pathway name" value="Immunoregulatory interactions between a Lymphoid and a non-Lymphoid cell"/>
</dbReference>
<dbReference type="Reactome" id="R-HSA-6798695">
    <property type="pathway name" value="Neutrophil degranulation"/>
</dbReference>
<dbReference type="SignaLink" id="Q8N423"/>
<dbReference type="SIGNOR" id="Q8N423"/>
<dbReference type="BioGRID-ORCS" id="10288">
    <property type="hits" value="13 hits in 1132 CRISPR screens"/>
</dbReference>
<dbReference type="ChiTaRS" id="LILRB2">
    <property type="organism name" value="human"/>
</dbReference>
<dbReference type="EvolutionaryTrace" id="Q8N423"/>
<dbReference type="GenomeRNAi" id="10288"/>
<dbReference type="Pharos" id="Q8N423">
    <property type="development level" value="Tbio"/>
</dbReference>
<dbReference type="PRO" id="PR:Q8N423"/>
<dbReference type="Proteomes" id="UP000005640">
    <property type="component" value="Chromosome 19"/>
</dbReference>
<dbReference type="RNAct" id="Q8N423">
    <property type="molecule type" value="protein"/>
</dbReference>
<dbReference type="Bgee" id="ENSG00000131042">
    <property type="expression patterns" value="Expressed in monocyte and 98 other cell types or tissues"/>
</dbReference>
<dbReference type="ExpressionAtlas" id="Q8N423">
    <property type="expression patterns" value="baseline and differential"/>
</dbReference>
<dbReference type="GO" id="GO:0009986">
    <property type="term" value="C:cell surface"/>
    <property type="evidence" value="ECO:0000314"/>
    <property type="project" value="UniProtKB"/>
</dbReference>
<dbReference type="GO" id="GO:0005737">
    <property type="term" value="C:cytoplasm"/>
    <property type="evidence" value="ECO:0000314"/>
    <property type="project" value="BHF-UCL"/>
</dbReference>
<dbReference type="GO" id="GO:0005615">
    <property type="term" value="C:extracellular space"/>
    <property type="evidence" value="ECO:0000314"/>
    <property type="project" value="BHF-UCL"/>
</dbReference>
<dbReference type="GO" id="GO:0101003">
    <property type="term" value="C:ficolin-1-rich granule membrane"/>
    <property type="evidence" value="ECO:0000304"/>
    <property type="project" value="Reactome"/>
</dbReference>
<dbReference type="GO" id="GO:0016020">
    <property type="term" value="C:membrane"/>
    <property type="evidence" value="ECO:0000304"/>
    <property type="project" value="ProtInc"/>
</dbReference>
<dbReference type="GO" id="GO:0005886">
    <property type="term" value="C:plasma membrane"/>
    <property type="evidence" value="ECO:0000318"/>
    <property type="project" value="GO_Central"/>
</dbReference>
<dbReference type="GO" id="GO:0070821">
    <property type="term" value="C:tertiary granule membrane"/>
    <property type="evidence" value="ECO:0000304"/>
    <property type="project" value="Reactome"/>
</dbReference>
<dbReference type="GO" id="GO:0001540">
    <property type="term" value="F:amyloid-beta binding"/>
    <property type="evidence" value="ECO:0000315"/>
    <property type="project" value="ARUK-UCL"/>
</dbReference>
<dbReference type="GO" id="GO:0050839">
    <property type="term" value="F:cell adhesion molecule binding"/>
    <property type="evidence" value="ECO:0000353"/>
    <property type="project" value="BHF-UCL"/>
</dbReference>
<dbReference type="GO" id="GO:0032396">
    <property type="term" value="F:inhibitory MHC class I receptor activity"/>
    <property type="evidence" value="ECO:0000314"/>
    <property type="project" value="BHF-UCL"/>
</dbReference>
<dbReference type="GO" id="GO:0042288">
    <property type="term" value="F:MHC class I protein binding"/>
    <property type="evidence" value="ECO:0000314"/>
    <property type="project" value="UniProtKB"/>
</dbReference>
<dbReference type="GO" id="GO:0023029">
    <property type="term" value="F:MHC class Ib protein binding"/>
    <property type="evidence" value="ECO:0000314"/>
    <property type="project" value="UniProtKB"/>
</dbReference>
<dbReference type="GO" id="GO:0023025">
    <property type="term" value="F:MHC class Ib protein complex binding"/>
    <property type="evidence" value="ECO:0000314"/>
    <property type="project" value="UniProtKB"/>
</dbReference>
<dbReference type="GO" id="GO:0042803">
    <property type="term" value="F:protein homodimerization activity"/>
    <property type="evidence" value="ECO:0000353"/>
    <property type="project" value="ARUK-UCL"/>
</dbReference>
<dbReference type="GO" id="GO:0008157">
    <property type="term" value="F:protein phosphatase 1 binding"/>
    <property type="evidence" value="ECO:0000353"/>
    <property type="project" value="UniProtKB"/>
</dbReference>
<dbReference type="GO" id="GO:0044877">
    <property type="term" value="F:protein-containing complex binding"/>
    <property type="evidence" value="ECO:0000353"/>
    <property type="project" value="ARUK-UCL"/>
</dbReference>
<dbReference type="GO" id="GO:0002250">
    <property type="term" value="P:adaptive immune response"/>
    <property type="evidence" value="ECO:0007669"/>
    <property type="project" value="UniProtKB-KW"/>
</dbReference>
<dbReference type="GO" id="GO:0007166">
    <property type="term" value="P:cell surface receptor signaling pathway"/>
    <property type="evidence" value="ECO:0000304"/>
    <property type="project" value="ProtInc"/>
</dbReference>
<dbReference type="GO" id="GO:0007267">
    <property type="term" value="P:cell-cell signaling"/>
    <property type="evidence" value="ECO:0000304"/>
    <property type="project" value="ProtInc"/>
</dbReference>
<dbReference type="GO" id="GO:0006968">
    <property type="term" value="P:cellular defense response"/>
    <property type="evidence" value="ECO:0000304"/>
    <property type="project" value="ProtInc"/>
</dbReference>
<dbReference type="GO" id="GO:0071222">
    <property type="term" value="P:cellular response to lipopolysaccharide"/>
    <property type="evidence" value="ECO:0000315"/>
    <property type="project" value="BHF-UCL"/>
</dbReference>
<dbReference type="GO" id="GO:0002774">
    <property type="term" value="P:Fc receptor mediated inhibitory signaling pathway"/>
    <property type="evidence" value="ECO:0000314"/>
    <property type="project" value="UniProtKB"/>
</dbReference>
<dbReference type="GO" id="GO:0034113">
    <property type="term" value="P:heterotypic cell-cell adhesion"/>
    <property type="evidence" value="ECO:0000314"/>
    <property type="project" value="BHF-UCL"/>
</dbReference>
<dbReference type="GO" id="GO:0006955">
    <property type="term" value="P:immune response"/>
    <property type="evidence" value="ECO:0000304"/>
    <property type="project" value="ProtInc"/>
</dbReference>
<dbReference type="GO" id="GO:0002767">
    <property type="term" value="P:immune response-inhibiting cell surface receptor signaling pathway"/>
    <property type="evidence" value="ECO:0000314"/>
    <property type="project" value="BHF-UCL"/>
</dbReference>
<dbReference type="GO" id="GO:0002764">
    <property type="term" value="P:immune response-regulating signaling pathway"/>
    <property type="evidence" value="ECO:0000318"/>
    <property type="project" value="GO_Central"/>
</dbReference>
<dbReference type="GO" id="GO:0140105">
    <property type="term" value="P:interleukin-10-mediated signaling pathway"/>
    <property type="evidence" value="ECO:0000270"/>
    <property type="project" value="ARUK-UCL"/>
</dbReference>
<dbReference type="GO" id="GO:0007611">
    <property type="term" value="P:learning or memory"/>
    <property type="evidence" value="ECO:0000250"/>
    <property type="project" value="ARUK-UCL"/>
</dbReference>
<dbReference type="GO" id="GO:0002578">
    <property type="term" value="P:negative regulation of antigen processing and presentation"/>
    <property type="evidence" value="ECO:0000314"/>
    <property type="project" value="BHF-UCL"/>
</dbReference>
<dbReference type="GO" id="GO:0051926">
    <property type="term" value="P:negative regulation of calcium ion transport"/>
    <property type="evidence" value="ECO:0000314"/>
    <property type="project" value="UniProtKB"/>
</dbReference>
<dbReference type="GO" id="GO:1905875">
    <property type="term" value="P:negative regulation of postsynaptic density organization"/>
    <property type="evidence" value="ECO:0000305"/>
    <property type="project" value="ARUK-UCL"/>
</dbReference>
<dbReference type="GO" id="GO:0051248">
    <property type="term" value="P:negative regulation of protein metabolic process"/>
    <property type="evidence" value="ECO:0000250"/>
    <property type="project" value="ARUK-UCL"/>
</dbReference>
<dbReference type="GO" id="GO:2000524">
    <property type="term" value="P:negative regulation of T cell costimulation"/>
    <property type="evidence" value="ECO:0000315"/>
    <property type="project" value="ARUK-UCL"/>
</dbReference>
<dbReference type="GO" id="GO:0042130">
    <property type="term" value="P:negative regulation of T cell proliferation"/>
    <property type="evidence" value="ECO:0000314"/>
    <property type="project" value="BHF-UCL"/>
</dbReference>
<dbReference type="GO" id="GO:0032755">
    <property type="term" value="P:positive regulation of interleukin-6 production"/>
    <property type="evidence" value="ECO:0000303"/>
    <property type="project" value="BHF-UCL"/>
</dbReference>
<dbReference type="GO" id="GO:1900454">
    <property type="term" value="P:positive regulation of long-term synaptic depression"/>
    <property type="evidence" value="ECO:0000250"/>
    <property type="project" value="ARUK-UCL"/>
</dbReference>
<dbReference type="GO" id="GO:0045591">
    <property type="term" value="P:positive regulation of regulatory T cell differentiation"/>
    <property type="evidence" value="ECO:0000315"/>
    <property type="project" value="BHF-UCL"/>
</dbReference>
<dbReference type="GO" id="GO:0042102">
    <property type="term" value="P:positive regulation of T cell proliferation"/>
    <property type="evidence" value="ECO:0000314"/>
    <property type="project" value="BHF-UCL"/>
</dbReference>
<dbReference type="GO" id="GO:0002666">
    <property type="term" value="P:positive regulation of T cell tolerance induction"/>
    <property type="evidence" value="ECO:0000315"/>
    <property type="project" value="BHF-UCL"/>
</dbReference>
<dbReference type="GO" id="GO:0002645">
    <property type="term" value="P:positive regulation of tolerance induction"/>
    <property type="evidence" value="ECO:0000315"/>
    <property type="project" value="UniProtKB"/>
</dbReference>
<dbReference type="GO" id="GO:2001198">
    <property type="term" value="P:regulation of dendritic cell differentiation"/>
    <property type="evidence" value="ECO:0000305"/>
    <property type="project" value="BHF-UCL"/>
</dbReference>
<dbReference type="GO" id="GO:1900271">
    <property type="term" value="P:regulation of long-term synaptic potentiation"/>
    <property type="evidence" value="ECO:0000250"/>
    <property type="project" value="ARUK-UCL"/>
</dbReference>
<dbReference type="GO" id="GO:0007165">
    <property type="term" value="P:signal transduction"/>
    <property type="evidence" value="ECO:0000314"/>
    <property type="project" value="BHF-UCL"/>
</dbReference>
<dbReference type="CDD" id="cd05751">
    <property type="entry name" value="IgC2_D1_LILR_KIR_like"/>
    <property type="match status" value="1"/>
</dbReference>
<dbReference type="FunFam" id="2.60.40.10:FF:000049">
    <property type="entry name" value="Leukocyte immunoglobulin-like receptor subfamily B member 1"/>
    <property type="match status" value="4"/>
</dbReference>
<dbReference type="Gene3D" id="2.60.40.10">
    <property type="entry name" value="Immunoglobulins"/>
    <property type="match status" value="4"/>
</dbReference>
<dbReference type="InterPro" id="IPR007110">
    <property type="entry name" value="Ig-like_dom"/>
</dbReference>
<dbReference type="InterPro" id="IPR036179">
    <property type="entry name" value="Ig-like_dom_sf"/>
</dbReference>
<dbReference type="InterPro" id="IPR013783">
    <property type="entry name" value="Ig-like_fold"/>
</dbReference>
<dbReference type="InterPro" id="IPR050412">
    <property type="entry name" value="Ig-like_Receptors_ImmuneReg"/>
</dbReference>
<dbReference type="InterPro" id="IPR003599">
    <property type="entry name" value="Ig_sub"/>
</dbReference>
<dbReference type="InterPro" id="IPR003598">
    <property type="entry name" value="Ig_sub2"/>
</dbReference>
<dbReference type="InterPro" id="IPR013151">
    <property type="entry name" value="Immunoglobulin_dom"/>
</dbReference>
<dbReference type="PANTHER" id="PTHR11738:SF179">
    <property type="entry name" value="LEUKOCYTE IMMUNOGLOBULIN-LIKE RECEPTOR SUBFAMILY A MEMBER 5"/>
    <property type="match status" value="1"/>
</dbReference>
<dbReference type="PANTHER" id="PTHR11738">
    <property type="entry name" value="MHC CLASS I NK CELL RECEPTOR"/>
    <property type="match status" value="1"/>
</dbReference>
<dbReference type="Pfam" id="PF00047">
    <property type="entry name" value="ig"/>
    <property type="match status" value="2"/>
</dbReference>
<dbReference type="Pfam" id="PF13895">
    <property type="entry name" value="Ig_2"/>
    <property type="match status" value="1"/>
</dbReference>
<dbReference type="SMART" id="SM00409">
    <property type="entry name" value="IG"/>
    <property type="match status" value="3"/>
</dbReference>
<dbReference type="SMART" id="SM00408">
    <property type="entry name" value="IGc2"/>
    <property type="match status" value="3"/>
</dbReference>
<dbReference type="SUPFAM" id="SSF48726">
    <property type="entry name" value="Immunoglobulin"/>
    <property type="match status" value="4"/>
</dbReference>
<dbReference type="PROSITE" id="PS50835">
    <property type="entry name" value="IG_LIKE"/>
    <property type="match status" value="2"/>
</dbReference>
<organism>
    <name type="scientific">Homo sapiens</name>
    <name type="common">Human</name>
    <dbReference type="NCBI Taxonomy" id="9606"/>
    <lineage>
        <taxon>Eukaryota</taxon>
        <taxon>Metazoa</taxon>
        <taxon>Chordata</taxon>
        <taxon>Craniata</taxon>
        <taxon>Vertebrata</taxon>
        <taxon>Euteleostomi</taxon>
        <taxon>Mammalia</taxon>
        <taxon>Eutheria</taxon>
        <taxon>Euarchontoglires</taxon>
        <taxon>Primates</taxon>
        <taxon>Haplorrhini</taxon>
        <taxon>Catarrhini</taxon>
        <taxon>Hominidae</taxon>
        <taxon>Homo</taxon>
    </lineage>
</organism>
<protein>
    <recommendedName>
        <fullName>Leukocyte immunoglobulin-like receptor subfamily B member 2</fullName>
        <shortName>LIR-2</shortName>
        <shortName>Leukocyte immunoglobulin-like receptor 2</shortName>
    </recommendedName>
    <alternativeName>
        <fullName>CD85 antigen-like family member D</fullName>
    </alternativeName>
    <alternativeName>
        <fullName>Immunoglobulin-like transcript 4</fullName>
        <shortName>ILT-4</shortName>
    </alternativeName>
    <alternativeName>
        <fullName>Monocyte/macrophage immunoglobulin-like receptor 10</fullName>
        <shortName>MIR-10</shortName>
    </alternativeName>
    <cdAntigenName>CD85d</cdAntigenName>
</protein>
<name>LIRB2_HUMAN</name>
<accession>Q8N423</accession>
<accession>A2IXV5</accession>
<accession>A8MU67</accession>
<accession>C9JF29</accession>
<accession>O75017</accession>
<accession>Q8NHJ7</accession>
<accession>Q8NHJ8</accession>
<comment type="function">
    <text evidence="4 5 7 9 11 12 14 15">Receptor for class I MHC antigens. Recognizes a broad spectrum of HLA-A, HLA-B, HLA-C, HLA-G and HLA-F alleles (PubMed:11169396, PubMed:12853576, PubMed:16455647, PubMed:20448110, PubMed:27859042). Involved in the down-regulation of the immune response and the development of tolerance. Recognizes HLA-G in complex with B2M/beta-2 microglobulin and a nonamer self-peptide (peptide-bound HLA-G-B2M) triggering differentiation of type 1 regulatory T cells and myeloid-derived suppressor cells, both of which actively maintain maternal-fetal tolerance (PubMed:16455647, PubMed:20448110, PubMed:27859042). Competes with CD8A for binding to class I MHC antigens. Inhibits FCGR1A-mediated phosphorylation of cellular proteins and mobilization of intracellular calcium ions (PubMed:11875462, PubMed:12853576, PubMed:9548455, PubMed:9842885).</text>
</comment>
<comment type="subunit">
    <text evidence="4 9">Binds PTPN6 when phosphorylated. Binds FCGR1A. Interacts with peptide-bound HLA-G-B2M; this interaction is direct (PubMed:16455647). Interacts with peptide-bound HLA-F-B2M; this interaction is direct (PubMed:11169396).</text>
</comment>
<comment type="interaction">
    <interactant intactId="EBI-2816428">
        <id>Q8N423</id>
    </interactant>
    <interactant intactId="EBI-15485893">
        <id>Q9UKU9</id>
        <label>ANGPTL2</label>
    </interactant>
    <organismsDiffer>false</organismsDiffer>
    <experiments>5</experiments>
</comment>
<comment type="interaction">
    <interactant intactId="EBI-2816428">
        <id>Q8N423</id>
    </interactant>
    <interactant intactId="EBI-15485927">
        <id>Q86XS5</id>
        <label>ANGPTL5</label>
    </interactant>
    <organismsDiffer>false</organismsDiffer>
    <experiments>5</experiments>
</comment>
<comment type="interaction">
    <interactant intactId="EBI-2816428">
        <id>Q8N423</id>
    </interactant>
    <interactant intactId="EBI-821758">
        <id>PRO_0000000092</id>
        <label>APP</label>
        <dbReference type="UniProtKB" id="P05067"/>
    </interactant>
    <organismsDiffer>false</organismsDiffer>
    <experiments>7</experiments>
</comment>
<comment type="interaction">
    <interactant intactId="EBI-2816428">
        <id>Q8N423</id>
    </interactant>
    <interactant intactId="EBI-1046240">
        <id>P30447</id>
        <label>HLA-A</label>
    </interactant>
    <organismsDiffer>false</organismsDiffer>
    <experiments>2</experiments>
</comment>
<comment type="interaction">
    <interactant intactId="EBI-2816428">
        <id>Q8N423</id>
    </interactant>
    <interactant intactId="EBI-4289581">
        <id>Q95J06</id>
        <label>HLA-A</label>
    </interactant>
    <organismsDiffer>false</organismsDiffer>
    <experiments>2</experiments>
</comment>
<comment type="interaction">
    <interactant intactId="EBI-2816428">
        <id>Q8N423</id>
    </interactant>
    <interactant intactId="EBI-1046513">
        <id>P01889</id>
        <label>HLA-B</label>
    </interactant>
    <organismsDiffer>false</organismsDiffer>
    <experiments>7</experiments>
</comment>
<comment type="interaction">
    <interactant intactId="EBI-2816428">
        <id>Q8N423</id>
    </interactant>
    <interactant intactId="EBI-1051396">
        <id>P10321</id>
        <label>HLA-C</label>
    </interactant>
    <organismsDiffer>false</organismsDiffer>
    <experiments>6</experiments>
</comment>
<comment type="interaction">
    <interactant intactId="EBI-2816428">
        <id>Q8N423</id>
    </interactant>
    <interactant intactId="EBI-1043063">
        <id>P17693</id>
        <label>HLA-G</label>
    </interactant>
    <organismsDiffer>false</organismsDiffer>
    <experiments>10</experiments>
</comment>
<comment type="interaction">
    <interactant intactId="EBI-2816428">
        <id>Q8N423</id>
    </interactant>
    <interactant intactId="EBI-16586375">
        <id>P17693-2</id>
        <label>HLA-G</label>
    </interactant>
    <organismsDiffer>false</organismsDiffer>
    <experiments>4</experiments>
</comment>
<comment type="interaction">
    <interactant intactId="EBI-2816428">
        <id>Q8N423</id>
    </interactant>
    <interactant intactId="EBI-16586455">
        <id>P17693-5</id>
        <label>HLA-G</label>
    </interactant>
    <organismsDiffer>false</organismsDiffer>
    <experiments>2</experiments>
</comment>
<comment type="interaction">
    <interactant intactId="EBI-2816428">
        <id>Q8N423</id>
    </interactant>
    <interactant intactId="EBI-16586550">
        <id>P17693-6</id>
        <label>HLA-G</label>
    </interactant>
    <organismsDiffer>false</organismsDiffer>
    <experiments>3</experiments>
</comment>
<comment type="interaction">
    <interactant intactId="EBI-2816428">
        <id>Q8N423</id>
    </interactant>
    <interactant intactId="EBI-636374">
        <id>P46531</id>
        <label>NOTCH1</label>
    </interactant>
    <organismsDiffer>false</organismsDiffer>
    <experiments>8</experiments>
</comment>
<comment type="interaction">
    <interactant intactId="EBI-2816428">
        <id>Q8N423</id>
    </interactant>
    <interactant intactId="EBI-78260">
        <id>P29350</id>
        <label>PTPN6</label>
    </interactant>
    <organismsDiffer>false</organismsDiffer>
    <experiments>3</experiments>
</comment>
<comment type="subcellular location">
    <subcellularLocation>
        <location evidence="11">Cell membrane</location>
        <topology>Single-pass type I membrane protein</topology>
    </subcellularLocation>
</comment>
<comment type="alternative products">
    <event type="alternative promoter"/>
    <event type="alternative splicing"/>
    <event type="alternative initiation"/>
    <isoform>
        <id>Q8N423-2</id>
        <name>2</name>
        <sequence type="displayed"/>
    </isoform>
    <isoform>
        <id>Q8N423-1</id>
        <name>1</name>
        <sequence type="described" ref="VSP_061383"/>
    </isoform>
    <isoform>
        <id>Q8N423-3</id>
        <name>3</name>
        <sequence type="described" ref="VSP_061383 VSP_061384 VSP_061385"/>
    </isoform>
    <isoform>
        <id>Q8N423-4</id>
        <name>4</name>
        <sequence type="described" ref="VSP_061382 VSP_061383"/>
    </isoform>
</comment>
<comment type="tissue specificity">
    <text evidence="11 12 14 15">Expressed in monocytes and at lower levels in myeloid and plasmacytoid dendritic cells. Expressed in tolerogenic IL10-producing dendritic cells (PubMed:20448110). Expressed in myeloid-derived suppressor cells during pregnancy (PubMed:27859042). Detected at low levels in natural killer (NK) cells. Expressed in B cells.</text>
</comment>
<comment type="induction">
    <text evidence="10">Induced on monocyte-derived macrophages by S.typhimurium infection.</text>
</comment>
<comment type="domain">
    <text>Contains 3 copies of a cytoplasmic motif that is referred to as the immunoreceptor tyrosine-based inhibitor motif (ITIM). This motif is involved in modulation of cellular responses. The phosphorylated ITIM motif can bind the SH2 domain of several SH2-containing phosphatases.</text>
</comment>
<comment type="PTM">
    <text evidence="15">Phosphorylated on tyrosine residues. Dephosphorylated by PTPN6.</text>
</comment>
<comment type="miscellaneous">
    <molecule>Isoform 2</molecule>
    <text evidence="20">Alternative use of an acceptor site.</text>
</comment>
<gene>
    <name evidence="21" type="primary">LILRB2</name>
    <name evidence="17 18" type="synonym">ILT4</name>
    <name type="synonym">LIR2</name>
    <name type="synonym">MIR10</name>
</gene>
<reference key="1">
    <citation type="journal article" date="1997" name="Curr. Biol.">
        <title>A new human gene complex encoding the killer cell inhibitory receptors and related monocyte/macrophage receptors.</title>
        <authorList>
            <person name="Wagtmann N."/>
            <person name="Rojo S."/>
            <person name="Eichler E."/>
            <person name="Mohrenweiser H."/>
            <person name="Long E.O."/>
        </authorList>
    </citation>
    <scope>NUCLEOTIDE SEQUENCE [MRNA] (ISOFORM 2)</scope>
</reference>
<reference key="2">
    <citation type="journal article" date="1997" name="J. Exp. Med.">
        <title>A common inhibitory receptor for major histocompatibility complex class I molecules on human lymphoid and myelomonocytic cells.</title>
        <authorList>
            <person name="Colonna M."/>
            <person name="Navarro F."/>
            <person name="Bellon T."/>
            <person name="Llano M."/>
            <person name="Garcia P."/>
            <person name="Samaridis J."/>
            <person name="Angman L."/>
            <person name="Cella M."/>
            <person name="Lopez-Botet M."/>
        </authorList>
    </citation>
    <scope>NUCLEOTIDE SEQUENCE [MRNA] (ISOFORM 3)</scope>
    <scope>VARIANTS GLU-161; TYR-300; TRP-306 AND HIS-322</scope>
</reference>
<reference key="3">
    <citation type="journal article" date="1997" name="J. Immunol.">
        <title>A family of human lymphoid and myeloid Ig-like receptors, some of which bind to MHC class I molecules.</title>
        <authorList>
            <person name="Borges L."/>
            <person name="Hsu M.-L."/>
            <person name="Fanger N."/>
            <person name="Kubin M."/>
            <person name="Cosman D."/>
        </authorList>
    </citation>
    <scope>NUCLEOTIDE SEQUENCE [MRNA] (ISOFORM 1)</scope>
    <scope>TISSUE SPECIFICITY</scope>
    <scope>FUNCTION</scope>
    <scope>VARIANTS GLU-161; TYR-300; TRP-306 AND HIS-322</scope>
    <source>
        <tissue>Dendritic cell</tissue>
        <tissue>Peripheral blood monocyte</tissue>
    </source>
</reference>
<reference key="4">
    <citation type="submission" date="2000-07" db="EMBL/GenBank/DDBJ databases">
        <authorList>
            <person name="Canavez F.C."/>
        </authorList>
    </citation>
    <scope>NUCLEOTIDE SEQUENCE [MRNA] (ISOFORMS 1 AND 2)</scope>
    <scope>VARIANTS GLU-161; TYR-300; TRP-306 AND HIS-322</scope>
</reference>
<reference key="5">
    <citation type="journal article" date="2004" name="Nature">
        <title>The DNA sequence and biology of human chromosome 19.</title>
        <authorList>
            <person name="Grimwood J."/>
            <person name="Gordon L.A."/>
            <person name="Olsen A.S."/>
            <person name="Terry A."/>
            <person name="Schmutz J."/>
            <person name="Lamerdin J.E."/>
            <person name="Hellsten U."/>
            <person name="Goodstein D."/>
            <person name="Couronne O."/>
            <person name="Tran-Gyamfi M."/>
            <person name="Aerts A."/>
            <person name="Altherr M."/>
            <person name="Ashworth L."/>
            <person name="Bajorek E."/>
            <person name="Black S."/>
            <person name="Branscomb E."/>
            <person name="Caenepeel S."/>
            <person name="Carrano A.V."/>
            <person name="Caoile C."/>
            <person name="Chan Y.M."/>
            <person name="Christensen M."/>
            <person name="Cleland C.A."/>
            <person name="Copeland A."/>
            <person name="Dalin E."/>
            <person name="Dehal P."/>
            <person name="Denys M."/>
            <person name="Detter J.C."/>
            <person name="Escobar J."/>
            <person name="Flowers D."/>
            <person name="Fotopulos D."/>
            <person name="Garcia C."/>
            <person name="Georgescu A.M."/>
            <person name="Glavina T."/>
            <person name="Gomez M."/>
            <person name="Gonzales E."/>
            <person name="Groza M."/>
            <person name="Hammon N."/>
            <person name="Hawkins T."/>
            <person name="Haydu L."/>
            <person name="Ho I."/>
            <person name="Huang W."/>
            <person name="Israni S."/>
            <person name="Jett J."/>
            <person name="Kadner K."/>
            <person name="Kimball H."/>
            <person name="Kobayashi A."/>
            <person name="Larionov V."/>
            <person name="Leem S.-H."/>
            <person name="Lopez F."/>
            <person name="Lou Y."/>
            <person name="Lowry S."/>
            <person name="Malfatti S."/>
            <person name="Martinez D."/>
            <person name="McCready P.M."/>
            <person name="Medina C."/>
            <person name="Morgan J."/>
            <person name="Nelson K."/>
            <person name="Nolan M."/>
            <person name="Ovcharenko I."/>
            <person name="Pitluck S."/>
            <person name="Pollard M."/>
            <person name="Popkie A.P."/>
            <person name="Predki P."/>
            <person name="Quan G."/>
            <person name="Ramirez L."/>
            <person name="Rash S."/>
            <person name="Retterer J."/>
            <person name="Rodriguez A."/>
            <person name="Rogers S."/>
            <person name="Salamov A."/>
            <person name="Salazar A."/>
            <person name="She X."/>
            <person name="Smith D."/>
            <person name="Slezak T."/>
            <person name="Solovyev V."/>
            <person name="Thayer N."/>
            <person name="Tice H."/>
            <person name="Tsai M."/>
            <person name="Ustaszewska A."/>
            <person name="Vo N."/>
            <person name="Wagner M."/>
            <person name="Wheeler J."/>
            <person name="Wu K."/>
            <person name="Xie G."/>
            <person name="Yang J."/>
            <person name="Dubchak I."/>
            <person name="Furey T.S."/>
            <person name="DeJong P."/>
            <person name="Dickson M."/>
            <person name="Gordon D."/>
            <person name="Eichler E.E."/>
            <person name="Pennacchio L.A."/>
            <person name="Richardson P."/>
            <person name="Stubbs L."/>
            <person name="Rokhsar D.S."/>
            <person name="Myers R.M."/>
            <person name="Rubin E.M."/>
            <person name="Lucas S.M."/>
        </authorList>
    </citation>
    <scope>NUCLEOTIDE SEQUENCE [LARGE SCALE GENOMIC DNA]</scope>
</reference>
<reference key="6">
    <citation type="journal article" date="2004" name="Genome Res.">
        <title>The status, quality, and expansion of the NIH full-length cDNA project: the Mammalian Gene Collection (MGC).</title>
        <authorList>
            <consortium name="The MGC Project Team"/>
        </authorList>
    </citation>
    <scope>NUCLEOTIDE SEQUENCE [LARGE SCALE MRNA] (ISOFORM 1)</scope>
    <scope>VARIANTS GLU-161; TYR-300; TRP-306 AND HIS-322</scope>
    <source>
        <tissue>Peripheral blood leukocyte</tissue>
    </source>
</reference>
<reference key="7">
    <citation type="journal article" date="1998" name="Eur. J. Immunol.">
        <title>The MHC class I binding proteins LIR-1 and LIR-2 inhibit Fc receptor-mediated signaling in monocytes.</title>
        <authorList>
            <person name="Fanger N.A."/>
            <person name="Cosman D."/>
            <person name="Peterson L."/>
            <person name="Braddy S.C."/>
            <person name="Maliszewski C.R."/>
            <person name="Borges L."/>
        </authorList>
    </citation>
    <scope>INTERACTION WITH PTPN6 AND FCGR1A</scope>
    <scope>PHOSPHORYLATION</scope>
    <scope>TISSUE SPECIFICITY</scope>
    <scope>FUNCTION</scope>
</reference>
<reference key="8">
    <citation type="journal article" date="2000" name="Eur. J. Immunol.">
        <title>Functional characterization of HLA-F and binding of HLA-F tetramers to ILT2 and ILT4 receptors.</title>
        <authorList>
            <person name="Lepin E.J."/>
            <person name="Bastin J.M."/>
            <person name="Allan D.S."/>
            <person name="Roncador G."/>
            <person name="Braud V.M."/>
            <person name="Mason D.Y."/>
            <person name="van der Merwe P.A."/>
            <person name="McMichael A.J."/>
            <person name="Bell J.I."/>
            <person name="Powis S.H."/>
            <person name="O'Callaghan C.A."/>
        </authorList>
    </citation>
    <scope>FUNCTION</scope>
    <scope>SUBUNIT</scope>
    <scope>INTERACTION WITH HLA-F</scope>
</reference>
<reference key="9">
    <citation type="journal article" date="2002" name="Nat. Immunol.">
        <title>Tolerization of dendritic cells by T(S) cells: the crucial role of inhibitory receptors ILT3 and ILT4.</title>
        <authorList>
            <person name="Chang C.C."/>
            <person name="Ciubotariu R."/>
            <person name="Manavalan J.S."/>
            <person name="Yuan J."/>
            <person name="Colovai A.I."/>
            <person name="Piazza F."/>
            <person name="Lederman S."/>
            <person name="Colonna M."/>
            <person name="Cortesini R."/>
            <person name="Dalla-Favera R."/>
            <person name="Suciu-Foca N."/>
        </authorList>
    </citation>
    <scope>FUNCTION</scope>
</reference>
<reference key="10">
    <citation type="journal article" date="2003" name="Proc. Natl. Acad. Sci. U.S.A.">
        <title>Human inhibitory receptors Ig-like transcript 2 (ILT2) and ILT4 compete with CD8 for MHC class I binding and bind preferentially to HLA-G.</title>
        <authorList>
            <person name="Shiroishi M."/>
            <person name="Tsumoto K."/>
            <person name="Amano K."/>
            <person name="Shirakihara Y."/>
            <person name="Colonna M."/>
            <person name="Braud V.M."/>
            <person name="Allan D.S.J."/>
            <person name="Makadzange A."/>
            <person name="Rowland-Jones S."/>
            <person name="Willcox B.E."/>
            <person name="Jones E.Y."/>
            <person name="van der Merwe P.A."/>
            <person name="Kumagai I."/>
            <person name="Maenaka K."/>
        </authorList>
    </citation>
    <scope>INTERACTION WITH TYPE I MHC ALLELES</scope>
    <scope>FUNCTION</scope>
</reference>
<reference key="11">
    <citation type="journal article" date="2006" name="J. Biol. Chem.">
        <title>Efficient leukocyte Ig-like receptor signaling and crystal structure of disulfide-linked HLA-G dimer.</title>
        <authorList>
            <person name="Shiroishi M."/>
            <person name="Kuroki K."/>
            <person name="Ose T."/>
            <person name="Rasubala L."/>
            <person name="Shiratori I."/>
            <person name="Arase H."/>
            <person name="Tsumoto K."/>
            <person name="Kumagai I."/>
            <person name="Kohda D."/>
            <person name="Maenaka K."/>
        </authorList>
    </citation>
    <scope>FUNCTION</scope>
    <scope>SUBUNIT</scope>
    <scope>INTERACTION WITH HLA-G</scope>
</reference>
<reference key="12">
    <citation type="journal article" date="2009" name="BMC Immunol.">
        <title>The inhibitory receptor LILRB4 (ILT3) modulates antigen presenting cell phenotype and, along with LILRB2 (ILT4), is upregulated in response to Salmonella infection.</title>
        <authorList>
            <person name="Brown D.P."/>
            <person name="Jones D.C."/>
            <person name="Anderson K.J."/>
            <person name="Lapaque N."/>
            <person name="Buerki R.A."/>
            <person name="Trowsdale J."/>
            <person name="Allen R.L."/>
        </authorList>
    </citation>
    <scope>INDUCTION</scope>
</reference>
<reference key="13">
    <citation type="journal article" date="2010" name="Blood">
        <title>Differentiation of type 1 T regulatory cells (Tr1) by tolerogenic DC-10 requires the IL-10-dependent ILT4/HLA-G pathway.</title>
        <authorList>
            <person name="Gregori S."/>
            <person name="Tomasoni D."/>
            <person name="Pacciani V."/>
            <person name="Scirpoli M."/>
            <person name="Battaglia M."/>
            <person name="Magnani C.F."/>
            <person name="Hauben E."/>
            <person name="Roncarolo M.G."/>
        </authorList>
    </citation>
    <scope>FUNCTION</scope>
    <scope>TISSUE SPECIFICITY</scope>
    <scope>SUBCELLULAR LOCATION</scope>
</reference>
<reference key="14">
    <citation type="journal article" date="2017" name="Eur. J. Immunol.">
        <title>HLA-G promotes myeloid-derived suppressor cell accumulation and suppressive activity during human pregnancy through engagement of the receptor ILT4.</title>
        <authorList>
            <person name="Koestlin N."/>
            <person name="Ostermeir A.L."/>
            <person name="Spring B."/>
            <person name="Schwarz J."/>
            <person name="Marme A."/>
            <person name="Walter C.B."/>
            <person name="Poets C.F."/>
            <person name="Gille C."/>
        </authorList>
    </citation>
    <scope>FUNCTION</scope>
    <scope>TISSUE SPECIFICITY</scope>
</reference>
<reference key="15">
    <citation type="journal article" date="2002" name="BMC Struct. Biol.">
        <title>Crystal structure of LIR-2 (ILT4) at 1.8 A: differences from LIR-1 (ILT2) in regions implicated in the binding of the human cytomegalovirus class I MHC homolog UL18.</title>
        <authorList>
            <person name="Willcox B.E."/>
            <person name="Thomas L.M."/>
            <person name="Chapman T.L."/>
            <person name="Heikema A.P."/>
            <person name="West A.P. Jr."/>
            <person name="Bjorkman P.J."/>
        </authorList>
    </citation>
    <scope>X-RAY CRYSTALLOGRAPHY (1.80 ANGSTROMS) OF 24-219</scope>
    <scope>DISULFIDE BONDS</scope>
</reference>
<proteinExistence type="evidence at protein level"/>
<sequence length="597" mass="65005">MTPIVTVLICLGLSLGPRTRVQTGTIPKPTLWAEPDSVITQGSPVTLSCQGSLEAQEYRLYREKKSASWITRIRPELVKNGQFHIPSITWEHTGRYGCQYYSRARWSELSDPLVLVMTGAYPKPTLSAQPSPVVTSGGRVTLQCESQVAFGGFILCKEGEDEHPQCLNSQPHARGSSRAIFSVGPVSPNRRWSHRCYGYDLNSPYVWSSPSDLLELLVPGVSKKPSLSVQPGPVMAPGESLTLQCVSDVGYDRFVLYKEGERDLRQLPGRQPQAGLSQANFTLGPVSRSYGGQYRCYGAHNLSSECSAPSDPLDILITGQIRGTPFISVQPGPTVASGENVTLLCQSWRQFHTFLLTKAGAADAPLRLRSIHEYPKYQAEFPMSPVTSAHAGTYRCYGSLNSDPYLLSHPSEPLELVVSGPSMGSSPPPTGPISTPGPEDQPLTPTGSDPQSGLGRHLGVVIGILVAVVLLLLLLLLLFLILRHRRQGKHWTSTQRKADFQHPAGAVGPEPTDRGLQWRSSPAADAQEENLYAAVKDTQPEDGVEMDTRAAASEAPQDVTYAQLHSLTLRRKATEPPPSQEREPPAEPSIYATLAIH</sequence>
<feature type="signal peptide" evidence="1">
    <location>
        <begin position="1"/>
        <end position="21"/>
    </location>
</feature>
<feature type="chain" id="PRO_0000014821" description="Leukocyte immunoglobulin-like receptor subfamily B member 2">
    <location>
        <begin position="22"/>
        <end position="597"/>
    </location>
</feature>
<feature type="topological domain" description="Extracellular" evidence="1">
    <location>
        <begin position="22"/>
        <end position="460"/>
    </location>
</feature>
<feature type="transmembrane region" description="Helical" evidence="1">
    <location>
        <begin position="461"/>
        <end position="481"/>
    </location>
</feature>
<feature type="topological domain" description="Cytoplasmic" evidence="1">
    <location>
        <begin position="482"/>
        <end position="597"/>
    </location>
</feature>
<feature type="domain" description="Ig-like C2-type 1">
    <location>
        <begin position="27"/>
        <end position="110"/>
    </location>
</feature>
<feature type="domain" description="Ig-like C2-type 2">
    <location>
        <begin position="111"/>
        <end position="229"/>
    </location>
</feature>
<feature type="domain" description="Ig-like C2-type 3">
    <location>
        <begin position="230"/>
        <end position="318"/>
    </location>
</feature>
<feature type="domain" description="Ig-like C2-type 4">
    <location>
        <begin position="330"/>
        <end position="419"/>
    </location>
</feature>
<feature type="region of interest" description="Disordered" evidence="3">
    <location>
        <begin position="417"/>
        <end position="451"/>
    </location>
</feature>
<feature type="region of interest" description="Disordered" evidence="3">
    <location>
        <begin position="491"/>
        <end position="523"/>
    </location>
</feature>
<feature type="region of interest" description="Disordered" evidence="3">
    <location>
        <begin position="537"/>
        <end position="597"/>
    </location>
</feature>
<feature type="short sequence motif" description="ITIM motif 1">
    <location>
        <begin position="530"/>
        <end position="535"/>
    </location>
</feature>
<feature type="short sequence motif" description="ITIM motif 2">
    <location>
        <begin position="559"/>
        <end position="564"/>
    </location>
</feature>
<feature type="short sequence motif" description="ITIM motif 3">
    <location>
        <begin position="589"/>
        <end position="594"/>
    </location>
</feature>
<feature type="glycosylation site" description="N-linked (GlcNAc...) asparagine" evidence="1">
    <location>
        <position position="280"/>
    </location>
</feature>
<feature type="glycosylation site" description="N-linked (GlcNAc...) asparagine" evidence="1">
    <location>
        <position position="301"/>
    </location>
</feature>
<feature type="glycosylation site" description="N-linked (GlcNAc...) asparagine" evidence="1">
    <location>
        <position position="340"/>
    </location>
</feature>
<feature type="disulfide bond" evidence="2 6 22">
    <location>
        <begin position="49"/>
        <end position="98"/>
    </location>
</feature>
<feature type="disulfide bond" evidence="2 6 22">
    <location>
        <begin position="144"/>
        <end position="196"/>
    </location>
</feature>
<feature type="disulfide bond" evidence="2 6 22">
    <location>
        <begin position="156"/>
        <end position="166"/>
    </location>
</feature>
<feature type="disulfide bond" evidence="2">
    <location>
        <begin position="245"/>
        <end position="296"/>
    </location>
</feature>
<feature type="disulfide bond" evidence="2">
    <location>
        <begin position="345"/>
        <end position="396"/>
    </location>
</feature>
<feature type="splice variant" id="VSP_061382" description="In isoform 4.">
    <location>
        <begin position="1"/>
        <end position="116"/>
    </location>
</feature>
<feature type="splice variant" id="VSP_061383" description="In isoform 1, isoform 3 and isoform 4.">
    <original>P</original>
    <variation>PA</variation>
    <location>
        <position position="436"/>
    </location>
</feature>
<feature type="splice variant" id="VSP_061384" description="In isoform 3." evidence="19">
    <original>TQRKADFQHPAGAVGP</original>
    <variation>SPAQLPTPRKKTSMLP</variation>
    <location>
        <begin position="494"/>
        <end position="509"/>
    </location>
</feature>
<feature type="splice variant" id="VSP_061385" description="In isoform 3." evidence="19">
    <location>
        <begin position="510"/>
        <end position="597"/>
    </location>
</feature>
<feature type="sequence variant" id="VAR_016997" description="In dbSNP:rs383369.">
    <original>R</original>
    <variation>H</variation>
    <location>
        <position position="20"/>
    </location>
</feature>
<feature type="sequence variant" id="VAR_016998" description="In dbSNP:rs373032." evidence="8 13 14 16">
    <original>D</original>
    <variation>E</variation>
    <location>
        <position position="161"/>
    </location>
</feature>
<feature type="sequence variant" id="VAR_047432" description="In dbSNP:rs386056.">
    <original>M</original>
    <variation>V</variation>
    <location>
        <position position="235"/>
    </location>
</feature>
<feature type="sequence variant" id="VAR_016999" description="In dbSNP:rs7247538." evidence="8 13 14 16">
    <original>H</original>
    <variation>Y</variation>
    <location>
        <position position="300"/>
    </location>
</feature>
<feature type="sequence variant" id="VAR_017000" description="In dbSNP:rs7247451." evidence="8 13 14 16">
    <original>C</original>
    <variation>W</variation>
    <location>
        <position position="306"/>
    </location>
</feature>
<feature type="sequence variant" id="VAR_061314" description="In dbSNP:rs1128646." evidence="8 13 14 16">
    <original>R</original>
    <variation>H</variation>
    <location>
        <position position="322"/>
    </location>
</feature>
<feature type="sequence variant" id="VAR_047433" description="In dbSNP:rs7247055.">
    <original>T</original>
    <variation>R</variation>
    <location>
        <position position="324"/>
    </location>
</feature>
<feature type="sequence variant" id="VAR_047434" description="In dbSNP:rs7246737.">
    <original>F</original>
    <variation>S</variation>
    <location>
        <position position="326"/>
    </location>
</feature>
<feature type="sequence variant" id="VAR_047435" description="In dbSNP:rs7247025.">
    <original>R</original>
    <variation>G</variation>
    <location>
        <position position="349"/>
    </location>
</feature>
<feature type="sequence variant" id="VAR_061315" description="In dbSNP:rs4993133.">
    <original>D</original>
    <variation>N</variation>
    <location>
        <position position="403"/>
    </location>
</feature>
<feature type="sequence conflict" description="In Ref. 6; AAH36827." evidence="20" ref="6">
    <original>E</original>
    <variation>G</variation>
    <location>
        <position position="583"/>
    </location>
</feature>
<feature type="strand" evidence="24">
    <location>
        <begin position="30"/>
        <end position="35"/>
    </location>
</feature>
<feature type="strand" evidence="24">
    <location>
        <begin position="37"/>
        <end position="40"/>
    </location>
</feature>
<feature type="strand" evidence="24">
    <location>
        <begin position="45"/>
        <end position="50"/>
    </location>
</feature>
<feature type="strand" evidence="24">
    <location>
        <begin position="57"/>
        <end position="63"/>
    </location>
</feature>
<feature type="strand" evidence="26">
    <location>
        <begin position="68"/>
        <end position="72"/>
    </location>
</feature>
<feature type="helix" evidence="24">
    <location>
        <begin position="75"/>
        <end position="77"/>
    </location>
</feature>
<feature type="helix" evidence="23">
    <location>
        <begin position="78"/>
        <end position="80"/>
    </location>
</feature>
<feature type="strand" evidence="24">
    <location>
        <begin position="82"/>
        <end position="87"/>
    </location>
</feature>
<feature type="turn" evidence="24">
    <location>
        <begin position="90"/>
        <end position="92"/>
    </location>
</feature>
<feature type="strand" evidence="24">
    <location>
        <begin position="94"/>
        <end position="102"/>
    </location>
</feature>
<feature type="strand" evidence="24">
    <location>
        <begin position="113"/>
        <end position="118"/>
    </location>
</feature>
<feature type="strand" evidence="24">
    <location>
        <begin position="125"/>
        <end position="130"/>
    </location>
</feature>
<feature type="strand" evidence="24">
    <location>
        <begin position="140"/>
        <end position="158"/>
    </location>
</feature>
<feature type="strand" evidence="26">
    <location>
        <begin position="160"/>
        <end position="162"/>
    </location>
</feature>
<feature type="strand" evidence="24">
    <location>
        <begin position="166"/>
        <end position="168"/>
    </location>
</feature>
<feature type="strand" evidence="24">
    <location>
        <begin position="176"/>
        <end position="183"/>
    </location>
</feature>
<feature type="strand" evidence="26">
    <location>
        <begin position="188"/>
        <end position="190"/>
    </location>
</feature>
<feature type="strand" evidence="24">
    <location>
        <begin position="193"/>
        <end position="199"/>
    </location>
</feature>
<feature type="strand" evidence="26">
    <location>
        <begin position="203"/>
        <end position="207"/>
    </location>
</feature>
<feature type="strand" evidence="26">
    <location>
        <begin position="214"/>
        <end position="217"/>
    </location>
</feature>
<feature type="strand" evidence="25">
    <location>
        <begin position="226"/>
        <end position="231"/>
    </location>
</feature>
<feature type="strand" evidence="25">
    <location>
        <begin position="233"/>
        <end position="235"/>
    </location>
</feature>
<feature type="strand" evidence="25">
    <location>
        <begin position="241"/>
        <end position="249"/>
    </location>
</feature>
<feature type="strand" evidence="25">
    <location>
        <begin position="252"/>
        <end position="258"/>
    </location>
</feature>
<feature type="strand" evidence="25">
    <location>
        <begin position="264"/>
        <end position="268"/>
    </location>
</feature>
<feature type="strand" evidence="25">
    <location>
        <begin position="277"/>
        <end position="283"/>
    </location>
</feature>
<feature type="helix" evidence="25">
    <location>
        <begin position="288"/>
        <end position="290"/>
    </location>
</feature>
<feature type="strand" evidence="25">
    <location>
        <begin position="292"/>
        <end position="299"/>
    </location>
</feature>
<feature type="strand" evidence="25">
    <location>
        <begin position="313"/>
        <end position="317"/>
    </location>
</feature>
<feature type="strand" evidence="25">
    <location>
        <begin position="326"/>
        <end position="331"/>
    </location>
</feature>
<feature type="strand" evidence="25">
    <location>
        <begin position="333"/>
        <end position="335"/>
    </location>
</feature>
<feature type="strand" evidence="25">
    <location>
        <begin position="342"/>
        <end position="349"/>
    </location>
</feature>
<feature type="strand" evidence="25">
    <location>
        <begin position="352"/>
        <end position="361"/>
    </location>
</feature>
<feature type="strand" evidence="25">
    <location>
        <begin position="366"/>
        <end position="369"/>
    </location>
</feature>
<feature type="strand" evidence="25">
    <location>
        <begin position="371"/>
        <end position="373"/>
    </location>
</feature>
<feature type="strand" evidence="25">
    <location>
        <begin position="376"/>
        <end position="382"/>
    </location>
</feature>
<feature type="helix" evidence="25">
    <location>
        <begin position="388"/>
        <end position="390"/>
    </location>
</feature>
<feature type="strand" evidence="25">
    <location>
        <begin position="392"/>
        <end position="400"/>
    </location>
</feature>
<feature type="strand" evidence="25">
    <location>
        <begin position="403"/>
        <end position="407"/>
    </location>
</feature>
<feature type="strand" evidence="25">
    <location>
        <begin position="414"/>
        <end position="418"/>
    </location>
</feature>